<proteinExistence type="inferred from homology"/>
<protein>
    <recommendedName>
        <fullName evidence="1">Elongation factor Ts</fullName>
        <shortName evidence="1">EF-Ts</shortName>
    </recommendedName>
</protein>
<evidence type="ECO:0000255" key="1">
    <source>
        <dbReference type="HAMAP-Rule" id="MF_00050"/>
    </source>
</evidence>
<keyword id="KW-0963">Cytoplasm</keyword>
<keyword id="KW-0251">Elongation factor</keyword>
<keyword id="KW-0648">Protein biosynthesis</keyword>
<dbReference type="EMBL" id="CP000887">
    <property type="protein sequence ID" value="ACD72607.1"/>
    <property type="molecule type" value="Genomic_DNA"/>
</dbReference>
<dbReference type="RefSeq" id="WP_002964288.1">
    <property type="nucleotide sequence ID" value="NC_010742.1"/>
</dbReference>
<dbReference type="SMR" id="B2S610"/>
<dbReference type="GeneID" id="93016505"/>
<dbReference type="KEGG" id="bmc:BAbS19_I11000"/>
<dbReference type="HOGENOM" id="CLU_047155_2_0_5"/>
<dbReference type="Proteomes" id="UP000002565">
    <property type="component" value="Chromosome 1"/>
</dbReference>
<dbReference type="GO" id="GO:0005737">
    <property type="term" value="C:cytoplasm"/>
    <property type="evidence" value="ECO:0007669"/>
    <property type="project" value="UniProtKB-SubCell"/>
</dbReference>
<dbReference type="GO" id="GO:0003746">
    <property type="term" value="F:translation elongation factor activity"/>
    <property type="evidence" value="ECO:0007669"/>
    <property type="project" value="UniProtKB-UniRule"/>
</dbReference>
<dbReference type="CDD" id="cd14275">
    <property type="entry name" value="UBA_EF-Ts"/>
    <property type="match status" value="1"/>
</dbReference>
<dbReference type="FunFam" id="1.10.286.20:FF:000001">
    <property type="entry name" value="Elongation factor Ts"/>
    <property type="match status" value="1"/>
</dbReference>
<dbReference type="FunFam" id="1.10.8.10:FF:000001">
    <property type="entry name" value="Elongation factor Ts"/>
    <property type="match status" value="1"/>
</dbReference>
<dbReference type="Gene3D" id="1.10.286.20">
    <property type="match status" value="1"/>
</dbReference>
<dbReference type="Gene3D" id="1.10.8.10">
    <property type="entry name" value="DNA helicase RuvA subunit, C-terminal domain"/>
    <property type="match status" value="1"/>
</dbReference>
<dbReference type="Gene3D" id="3.30.479.20">
    <property type="entry name" value="Elongation factor Ts, dimerisation domain"/>
    <property type="match status" value="2"/>
</dbReference>
<dbReference type="HAMAP" id="MF_00050">
    <property type="entry name" value="EF_Ts"/>
    <property type="match status" value="1"/>
</dbReference>
<dbReference type="InterPro" id="IPR036402">
    <property type="entry name" value="EF-Ts_dimer_sf"/>
</dbReference>
<dbReference type="InterPro" id="IPR001816">
    <property type="entry name" value="Transl_elong_EFTs/EF1B"/>
</dbReference>
<dbReference type="InterPro" id="IPR014039">
    <property type="entry name" value="Transl_elong_EFTs/EF1B_dimer"/>
</dbReference>
<dbReference type="InterPro" id="IPR018101">
    <property type="entry name" value="Transl_elong_Ts_CS"/>
</dbReference>
<dbReference type="InterPro" id="IPR009060">
    <property type="entry name" value="UBA-like_sf"/>
</dbReference>
<dbReference type="NCBIfam" id="TIGR00116">
    <property type="entry name" value="tsf"/>
    <property type="match status" value="1"/>
</dbReference>
<dbReference type="PANTHER" id="PTHR11741">
    <property type="entry name" value="ELONGATION FACTOR TS"/>
    <property type="match status" value="1"/>
</dbReference>
<dbReference type="PANTHER" id="PTHR11741:SF0">
    <property type="entry name" value="ELONGATION FACTOR TS, MITOCHONDRIAL"/>
    <property type="match status" value="1"/>
</dbReference>
<dbReference type="Pfam" id="PF00889">
    <property type="entry name" value="EF_TS"/>
    <property type="match status" value="1"/>
</dbReference>
<dbReference type="SUPFAM" id="SSF54713">
    <property type="entry name" value="Elongation factor Ts (EF-Ts), dimerisation domain"/>
    <property type="match status" value="2"/>
</dbReference>
<dbReference type="SUPFAM" id="SSF46934">
    <property type="entry name" value="UBA-like"/>
    <property type="match status" value="1"/>
</dbReference>
<dbReference type="PROSITE" id="PS01127">
    <property type="entry name" value="EF_TS_2"/>
    <property type="match status" value="1"/>
</dbReference>
<organism>
    <name type="scientific">Brucella abortus (strain S19)</name>
    <dbReference type="NCBI Taxonomy" id="430066"/>
    <lineage>
        <taxon>Bacteria</taxon>
        <taxon>Pseudomonadati</taxon>
        <taxon>Pseudomonadota</taxon>
        <taxon>Alphaproteobacteria</taxon>
        <taxon>Hyphomicrobiales</taxon>
        <taxon>Brucellaceae</taxon>
        <taxon>Brucella/Ochrobactrum group</taxon>
        <taxon>Brucella</taxon>
    </lineage>
</organism>
<feature type="chain" id="PRO_1000116700" description="Elongation factor Ts">
    <location>
        <begin position="1"/>
        <end position="305"/>
    </location>
</feature>
<feature type="region of interest" description="Involved in Mg(2+) ion dislocation from EF-Tu" evidence="1">
    <location>
        <begin position="79"/>
        <end position="82"/>
    </location>
</feature>
<name>EFTS_BRUA1</name>
<sequence length="305" mass="31491">MSISASLVKELRDLTGAGMMDCKAALAATEGKIEAAVDWLRAKGIAKADKKAGRTAAEGLVGVAASGNKAVVVEVNSETDFVARNDAFQELVRKIAQAALSTDGSSEAVANANVDGKTVTEAAKDAVATIGENISFRRSAALSVPQGVVATYIHNGVADGLGKLGVLVAIETAGDAEAAQAFGRQVAMHVAAVNPLALTSADVNPEAAEREKAIFIDQARQSGKPDNIIEKMVEGRMRKFYEEVVLLSQAFVINPDLTVEAALKDAEKAIGAPAKITGFARIALGEGIEKEESDFAAEVAAAAKG</sequence>
<gene>
    <name evidence="1" type="primary">tsf</name>
    <name type="ordered locus">BAbS19_I11000</name>
</gene>
<accession>B2S610</accession>
<comment type="function">
    <text evidence="1">Associates with the EF-Tu.GDP complex and induces the exchange of GDP to GTP. It remains bound to the aminoacyl-tRNA.EF-Tu.GTP complex up to the GTP hydrolysis stage on the ribosome.</text>
</comment>
<comment type="subcellular location">
    <subcellularLocation>
        <location evidence="1">Cytoplasm</location>
    </subcellularLocation>
</comment>
<comment type="similarity">
    <text evidence="1">Belongs to the EF-Ts family.</text>
</comment>
<reference key="1">
    <citation type="journal article" date="2008" name="PLoS ONE">
        <title>Genome sequence of Brucella abortus vaccine strain S19 compared to virulent strains yields candidate virulence genes.</title>
        <authorList>
            <person name="Crasta O.R."/>
            <person name="Folkerts O."/>
            <person name="Fei Z."/>
            <person name="Mane S.P."/>
            <person name="Evans C."/>
            <person name="Martino-Catt S."/>
            <person name="Bricker B."/>
            <person name="Yu G."/>
            <person name="Du L."/>
            <person name="Sobral B.W."/>
        </authorList>
    </citation>
    <scope>NUCLEOTIDE SEQUENCE [LARGE SCALE GENOMIC DNA]</scope>
    <source>
        <strain>S19</strain>
    </source>
</reference>